<accession>B8GDQ7</accession>
<sequence length="121" mass="13879">MSAISPKIQNQIAMLQQVQQQMQTIMSQKTQYEMEIRENRRAEEELNDVPQESAVFMNVGTVMMQKPKEKVIASLQEKAESLELRVKSLEKQEKMMQAKFEQLQAQVKEALEGGNRPPNAA</sequence>
<keyword id="KW-0143">Chaperone</keyword>
<keyword id="KW-0963">Cytoplasm</keyword>
<keyword id="KW-1185">Reference proteome</keyword>
<dbReference type="EMBL" id="CP001338">
    <property type="protein sequence ID" value="ACL17408.1"/>
    <property type="molecule type" value="Genomic_DNA"/>
</dbReference>
<dbReference type="RefSeq" id="WP_012618727.1">
    <property type="nucleotide sequence ID" value="NC_011832.1"/>
</dbReference>
<dbReference type="SMR" id="B8GDQ7"/>
<dbReference type="STRING" id="521011.Mpal_2110"/>
<dbReference type="GeneID" id="7271588"/>
<dbReference type="KEGG" id="mpl:Mpal_2110"/>
<dbReference type="eggNOG" id="arCOG01342">
    <property type="taxonomic scope" value="Archaea"/>
</dbReference>
<dbReference type="HOGENOM" id="CLU_131909_0_0_2"/>
<dbReference type="OrthoDB" id="107608at2157"/>
<dbReference type="Proteomes" id="UP000002457">
    <property type="component" value="Chromosome"/>
</dbReference>
<dbReference type="GO" id="GO:0005737">
    <property type="term" value="C:cytoplasm"/>
    <property type="evidence" value="ECO:0007669"/>
    <property type="project" value="UniProtKB-SubCell"/>
</dbReference>
<dbReference type="GO" id="GO:0016272">
    <property type="term" value="C:prefoldin complex"/>
    <property type="evidence" value="ECO:0007669"/>
    <property type="project" value="UniProtKB-UniRule"/>
</dbReference>
<dbReference type="GO" id="GO:0044183">
    <property type="term" value="F:protein folding chaperone"/>
    <property type="evidence" value="ECO:0007669"/>
    <property type="project" value="TreeGrafter"/>
</dbReference>
<dbReference type="GO" id="GO:0051082">
    <property type="term" value="F:unfolded protein binding"/>
    <property type="evidence" value="ECO:0007669"/>
    <property type="project" value="UniProtKB-UniRule"/>
</dbReference>
<dbReference type="CDD" id="cd23162">
    <property type="entry name" value="Prefoldin_beta_GimC"/>
    <property type="match status" value="1"/>
</dbReference>
<dbReference type="Gene3D" id="1.10.287.370">
    <property type="match status" value="1"/>
</dbReference>
<dbReference type="HAMAP" id="MF_00307">
    <property type="entry name" value="PfdB"/>
    <property type="match status" value="1"/>
</dbReference>
<dbReference type="InterPro" id="IPR002777">
    <property type="entry name" value="PFD_beta-like"/>
</dbReference>
<dbReference type="InterPro" id="IPR012713">
    <property type="entry name" value="PfdB"/>
</dbReference>
<dbReference type="InterPro" id="IPR009053">
    <property type="entry name" value="Prefoldin"/>
</dbReference>
<dbReference type="NCBIfam" id="TIGR02338">
    <property type="entry name" value="gimC_beta"/>
    <property type="match status" value="1"/>
</dbReference>
<dbReference type="PANTHER" id="PTHR20903:SF0">
    <property type="entry name" value="PREFOLDIN SUBUNIT 1"/>
    <property type="match status" value="1"/>
</dbReference>
<dbReference type="PANTHER" id="PTHR20903">
    <property type="entry name" value="PREFOLDIN SUBUNIT 1-RELATED"/>
    <property type="match status" value="1"/>
</dbReference>
<dbReference type="Pfam" id="PF01920">
    <property type="entry name" value="Prefoldin_2"/>
    <property type="match status" value="1"/>
</dbReference>
<dbReference type="SUPFAM" id="SSF46579">
    <property type="entry name" value="Prefoldin"/>
    <property type="match status" value="1"/>
</dbReference>
<proteinExistence type="inferred from homology"/>
<evidence type="ECO:0000255" key="1">
    <source>
        <dbReference type="HAMAP-Rule" id="MF_00307"/>
    </source>
</evidence>
<reference key="1">
    <citation type="journal article" date="2015" name="Genome Announc.">
        <title>Complete Genome Sequence of Methanosphaerula palustris E1-9CT, a Hydrogenotrophic Methanogen Isolated from a Minerotrophic Fen Peatland.</title>
        <authorList>
            <person name="Cadillo-Quiroz H."/>
            <person name="Browne P."/>
            <person name="Kyrpides N."/>
            <person name="Woyke T."/>
            <person name="Goodwin L."/>
            <person name="Detter C."/>
            <person name="Yavitt J.B."/>
            <person name="Zinder S.H."/>
        </authorList>
    </citation>
    <scope>NUCLEOTIDE SEQUENCE [LARGE SCALE GENOMIC DNA]</scope>
    <source>
        <strain>ATCC BAA-1556 / DSM 19958 / E1-9c</strain>
    </source>
</reference>
<gene>
    <name evidence="1" type="primary">pfdB</name>
    <name type="ordered locus">Mpal_2110</name>
</gene>
<organism>
    <name type="scientific">Methanosphaerula palustris (strain ATCC BAA-1556 / DSM 19958 / E1-9c)</name>
    <dbReference type="NCBI Taxonomy" id="521011"/>
    <lineage>
        <taxon>Archaea</taxon>
        <taxon>Methanobacteriati</taxon>
        <taxon>Methanobacteriota</taxon>
        <taxon>Stenosarchaea group</taxon>
        <taxon>Methanomicrobia</taxon>
        <taxon>Methanomicrobiales</taxon>
        <taxon>Methanoregulaceae</taxon>
        <taxon>Methanosphaerula</taxon>
    </lineage>
</organism>
<name>PFDB_METPE</name>
<feature type="chain" id="PRO_1000132878" description="Prefoldin subunit beta">
    <location>
        <begin position="1"/>
        <end position="121"/>
    </location>
</feature>
<comment type="function">
    <text evidence="1">Molecular chaperone capable of stabilizing a range of proteins. Seems to fulfill an ATP-independent, HSP70-like function in archaeal de novo protein folding.</text>
</comment>
<comment type="subunit">
    <text evidence="1">Heterohexamer of two alpha and four beta subunits.</text>
</comment>
<comment type="subcellular location">
    <subcellularLocation>
        <location evidence="1">Cytoplasm</location>
    </subcellularLocation>
</comment>
<comment type="similarity">
    <text evidence="1">Belongs to the prefoldin subunit beta family.</text>
</comment>
<protein>
    <recommendedName>
        <fullName evidence="1">Prefoldin subunit beta</fullName>
    </recommendedName>
    <alternativeName>
        <fullName evidence="1">GimC subunit beta</fullName>
    </alternativeName>
</protein>